<gene>
    <name evidence="1" type="primary">pyrH</name>
    <name type="ordered locus">Pcryo_1714</name>
</gene>
<feature type="chain" id="PRO_0000323930" description="Uridylate kinase">
    <location>
        <begin position="1"/>
        <end position="241"/>
    </location>
</feature>
<feature type="binding site" evidence="1">
    <location>
        <begin position="14"/>
        <end position="17"/>
    </location>
    <ligand>
        <name>ATP</name>
        <dbReference type="ChEBI" id="CHEBI:30616"/>
    </ligand>
</feature>
<feature type="binding site" evidence="1">
    <location>
        <position position="56"/>
    </location>
    <ligand>
        <name>UMP</name>
        <dbReference type="ChEBI" id="CHEBI:57865"/>
    </ligand>
</feature>
<feature type="binding site" evidence="1">
    <location>
        <position position="57"/>
    </location>
    <ligand>
        <name>ATP</name>
        <dbReference type="ChEBI" id="CHEBI:30616"/>
    </ligand>
</feature>
<feature type="binding site" evidence="1">
    <location>
        <position position="61"/>
    </location>
    <ligand>
        <name>ATP</name>
        <dbReference type="ChEBI" id="CHEBI:30616"/>
    </ligand>
</feature>
<feature type="binding site" evidence="1">
    <location>
        <position position="77"/>
    </location>
    <ligand>
        <name>UMP</name>
        <dbReference type="ChEBI" id="CHEBI:57865"/>
    </ligand>
</feature>
<feature type="binding site" evidence="1">
    <location>
        <begin position="138"/>
        <end position="145"/>
    </location>
    <ligand>
        <name>UMP</name>
        <dbReference type="ChEBI" id="CHEBI:57865"/>
    </ligand>
</feature>
<feature type="binding site" evidence="1">
    <location>
        <position position="165"/>
    </location>
    <ligand>
        <name>ATP</name>
        <dbReference type="ChEBI" id="CHEBI:30616"/>
    </ligand>
</feature>
<feature type="binding site" evidence="1">
    <location>
        <position position="171"/>
    </location>
    <ligand>
        <name>ATP</name>
        <dbReference type="ChEBI" id="CHEBI:30616"/>
    </ligand>
</feature>
<feature type="binding site" evidence="1">
    <location>
        <position position="174"/>
    </location>
    <ligand>
        <name>ATP</name>
        <dbReference type="ChEBI" id="CHEBI:30616"/>
    </ligand>
</feature>
<evidence type="ECO:0000255" key="1">
    <source>
        <dbReference type="HAMAP-Rule" id="MF_01220"/>
    </source>
</evidence>
<sequence>MSDKNPRYSRILLKLSGEALAGTKDMGIDTEVLDKMSLSIAHLRGLGVQVGIVVGGGNLYRGAQLQKEGLVGRVTGDQMGMLATVMNGLAMRDALERRNIKTRLMSALPIGEVTESYSSRNAIRYLKNGEVCIFVAGTGNPFFTTDTAACLRGIEIEAGLILKATKVDGVYDKDPSLHSDAVKYDGLTFDEVLEQKLGVMDLTAIALCREHDVPLQVFDMNKPNALLNVVMGENEGTRVYH</sequence>
<dbReference type="EC" id="2.7.4.22" evidence="1"/>
<dbReference type="EMBL" id="CP000323">
    <property type="protein sequence ID" value="ABE75491.1"/>
    <property type="molecule type" value="Genomic_DNA"/>
</dbReference>
<dbReference type="RefSeq" id="WP_011514039.1">
    <property type="nucleotide sequence ID" value="NC_007969.1"/>
</dbReference>
<dbReference type="SMR" id="Q1QA12"/>
<dbReference type="STRING" id="335284.Pcryo_1714"/>
<dbReference type="KEGG" id="pcr:Pcryo_1714"/>
<dbReference type="eggNOG" id="COG0528">
    <property type="taxonomic scope" value="Bacteria"/>
</dbReference>
<dbReference type="HOGENOM" id="CLU_033861_0_0_6"/>
<dbReference type="UniPathway" id="UPA00159">
    <property type="reaction ID" value="UER00275"/>
</dbReference>
<dbReference type="Proteomes" id="UP000002425">
    <property type="component" value="Chromosome"/>
</dbReference>
<dbReference type="GO" id="GO:0005829">
    <property type="term" value="C:cytosol"/>
    <property type="evidence" value="ECO:0007669"/>
    <property type="project" value="TreeGrafter"/>
</dbReference>
<dbReference type="GO" id="GO:0005524">
    <property type="term" value="F:ATP binding"/>
    <property type="evidence" value="ECO:0007669"/>
    <property type="project" value="UniProtKB-KW"/>
</dbReference>
<dbReference type="GO" id="GO:0033862">
    <property type="term" value="F:UMP kinase activity"/>
    <property type="evidence" value="ECO:0007669"/>
    <property type="project" value="UniProtKB-EC"/>
</dbReference>
<dbReference type="GO" id="GO:0044210">
    <property type="term" value="P:'de novo' CTP biosynthetic process"/>
    <property type="evidence" value="ECO:0007669"/>
    <property type="project" value="UniProtKB-UniRule"/>
</dbReference>
<dbReference type="GO" id="GO:0006225">
    <property type="term" value="P:UDP biosynthetic process"/>
    <property type="evidence" value="ECO:0007669"/>
    <property type="project" value="TreeGrafter"/>
</dbReference>
<dbReference type="CDD" id="cd04254">
    <property type="entry name" value="AAK_UMPK-PyrH-Ec"/>
    <property type="match status" value="1"/>
</dbReference>
<dbReference type="FunFam" id="3.40.1160.10:FF:000001">
    <property type="entry name" value="Uridylate kinase"/>
    <property type="match status" value="1"/>
</dbReference>
<dbReference type="Gene3D" id="3.40.1160.10">
    <property type="entry name" value="Acetylglutamate kinase-like"/>
    <property type="match status" value="1"/>
</dbReference>
<dbReference type="HAMAP" id="MF_01220_B">
    <property type="entry name" value="PyrH_B"/>
    <property type="match status" value="1"/>
</dbReference>
<dbReference type="InterPro" id="IPR036393">
    <property type="entry name" value="AceGlu_kinase-like_sf"/>
</dbReference>
<dbReference type="InterPro" id="IPR001048">
    <property type="entry name" value="Asp/Glu/Uridylate_kinase"/>
</dbReference>
<dbReference type="InterPro" id="IPR011817">
    <property type="entry name" value="Uridylate_kinase"/>
</dbReference>
<dbReference type="InterPro" id="IPR015963">
    <property type="entry name" value="Uridylate_kinase_bac"/>
</dbReference>
<dbReference type="NCBIfam" id="TIGR02075">
    <property type="entry name" value="pyrH_bact"/>
    <property type="match status" value="1"/>
</dbReference>
<dbReference type="PANTHER" id="PTHR42833">
    <property type="entry name" value="URIDYLATE KINASE"/>
    <property type="match status" value="1"/>
</dbReference>
<dbReference type="PANTHER" id="PTHR42833:SF4">
    <property type="entry name" value="URIDYLATE KINASE PUMPKIN, CHLOROPLASTIC"/>
    <property type="match status" value="1"/>
</dbReference>
<dbReference type="Pfam" id="PF00696">
    <property type="entry name" value="AA_kinase"/>
    <property type="match status" value="1"/>
</dbReference>
<dbReference type="PIRSF" id="PIRSF005650">
    <property type="entry name" value="Uridylate_kin"/>
    <property type="match status" value="1"/>
</dbReference>
<dbReference type="SUPFAM" id="SSF53633">
    <property type="entry name" value="Carbamate kinase-like"/>
    <property type="match status" value="1"/>
</dbReference>
<organism>
    <name type="scientific">Psychrobacter cryohalolentis (strain ATCC BAA-1226 / DSM 17306 / VKM B-2378 / K5)</name>
    <dbReference type="NCBI Taxonomy" id="335284"/>
    <lineage>
        <taxon>Bacteria</taxon>
        <taxon>Pseudomonadati</taxon>
        <taxon>Pseudomonadota</taxon>
        <taxon>Gammaproteobacteria</taxon>
        <taxon>Moraxellales</taxon>
        <taxon>Moraxellaceae</taxon>
        <taxon>Psychrobacter</taxon>
    </lineage>
</organism>
<comment type="function">
    <text evidence="1">Catalyzes the reversible phosphorylation of UMP to UDP.</text>
</comment>
<comment type="catalytic activity">
    <reaction evidence="1">
        <text>UMP + ATP = UDP + ADP</text>
        <dbReference type="Rhea" id="RHEA:24400"/>
        <dbReference type="ChEBI" id="CHEBI:30616"/>
        <dbReference type="ChEBI" id="CHEBI:57865"/>
        <dbReference type="ChEBI" id="CHEBI:58223"/>
        <dbReference type="ChEBI" id="CHEBI:456216"/>
        <dbReference type="EC" id="2.7.4.22"/>
    </reaction>
</comment>
<comment type="activity regulation">
    <text evidence="1">Inhibited by UTP.</text>
</comment>
<comment type="pathway">
    <text evidence="1">Pyrimidine metabolism; CTP biosynthesis via de novo pathway; UDP from UMP (UMPK route): step 1/1.</text>
</comment>
<comment type="subunit">
    <text evidence="1">Homohexamer.</text>
</comment>
<comment type="subcellular location">
    <subcellularLocation>
        <location evidence="1">Cytoplasm</location>
    </subcellularLocation>
</comment>
<comment type="similarity">
    <text evidence="1">Belongs to the UMP kinase family.</text>
</comment>
<proteinExistence type="inferred from homology"/>
<keyword id="KW-0067">ATP-binding</keyword>
<keyword id="KW-0963">Cytoplasm</keyword>
<keyword id="KW-0418">Kinase</keyword>
<keyword id="KW-0547">Nucleotide-binding</keyword>
<keyword id="KW-0665">Pyrimidine biosynthesis</keyword>
<keyword id="KW-0808">Transferase</keyword>
<accession>Q1QA12</accession>
<name>PYRH_PSYCK</name>
<reference key="1">
    <citation type="submission" date="2006-03" db="EMBL/GenBank/DDBJ databases">
        <title>Complete sequence of chromosome of Psychrobacter cryohalolentis K5.</title>
        <authorList>
            <consortium name="US DOE Joint Genome Institute"/>
            <person name="Copeland A."/>
            <person name="Lucas S."/>
            <person name="Lapidus A."/>
            <person name="Barry K."/>
            <person name="Detter J.C."/>
            <person name="Glavina T."/>
            <person name="Hammon N."/>
            <person name="Israni S."/>
            <person name="Dalin E."/>
            <person name="Tice H."/>
            <person name="Pitluck S."/>
            <person name="Brettin T."/>
            <person name="Bruce D."/>
            <person name="Han C."/>
            <person name="Tapia R."/>
            <person name="Sims D.R."/>
            <person name="Gilna P."/>
            <person name="Schmutz J."/>
            <person name="Larimer F."/>
            <person name="Land M."/>
            <person name="Hauser L."/>
            <person name="Kyrpides N."/>
            <person name="Kim E."/>
            <person name="Richardson P."/>
        </authorList>
    </citation>
    <scope>NUCLEOTIDE SEQUENCE [LARGE SCALE GENOMIC DNA]</scope>
    <source>
        <strain>ATCC BAA-1226 / DSM 17306 / VKM B-2378 / K5</strain>
    </source>
</reference>
<protein>
    <recommendedName>
        <fullName evidence="1">Uridylate kinase</fullName>
        <shortName evidence="1">UK</shortName>
        <ecNumber evidence="1">2.7.4.22</ecNumber>
    </recommendedName>
    <alternativeName>
        <fullName evidence="1">Uridine monophosphate kinase</fullName>
        <shortName evidence="1">UMP kinase</shortName>
        <shortName evidence="1">UMPK</shortName>
    </alternativeName>
</protein>